<proteinExistence type="inferred from homology"/>
<gene>
    <name evidence="1" type="primary">whiA</name>
    <name type="ordered locus">MPN_241</name>
    <name type="ORF">K04_orf280</name>
    <name type="ORF">MP590</name>
</gene>
<dbReference type="EMBL" id="U00089">
    <property type="protein sequence ID" value="AAB96238.1"/>
    <property type="molecule type" value="Genomic_DNA"/>
</dbReference>
<dbReference type="PIR" id="S73916">
    <property type="entry name" value="S73916"/>
</dbReference>
<dbReference type="RefSeq" id="NP_109929.1">
    <property type="nucleotide sequence ID" value="NC_000912.1"/>
</dbReference>
<dbReference type="RefSeq" id="WP_010874598.1">
    <property type="nucleotide sequence ID" value="NZ_OU342337.1"/>
</dbReference>
<dbReference type="SMR" id="P75530"/>
<dbReference type="IntAct" id="P75530">
    <property type="interactions" value="1"/>
</dbReference>
<dbReference type="STRING" id="272634.MPN_241"/>
<dbReference type="EnsemblBacteria" id="AAB96238">
    <property type="protein sequence ID" value="AAB96238"/>
    <property type="gene ID" value="MPN_241"/>
</dbReference>
<dbReference type="GeneID" id="66609113"/>
<dbReference type="KEGG" id="mpn:MPN_241"/>
<dbReference type="PATRIC" id="fig|272634.6.peg.260"/>
<dbReference type="HOGENOM" id="CLU_993285_0_0_14"/>
<dbReference type="OrthoDB" id="401278at2"/>
<dbReference type="BioCyc" id="MPNE272634:G1GJ3-383-MONOMER"/>
<dbReference type="Proteomes" id="UP000000808">
    <property type="component" value="Chromosome"/>
</dbReference>
<dbReference type="GO" id="GO:0003677">
    <property type="term" value="F:DNA binding"/>
    <property type="evidence" value="ECO:0007669"/>
    <property type="project" value="UniProtKB-UniRule"/>
</dbReference>
<dbReference type="GO" id="GO:0051301">
    <property type="term" value="P:cell division"/>
    <property type="evidence" value="ECO:0007669"/>
    <property type="project" value="UniProtKB-UniRule"/>
</dbReference>
<dbReference type="GO" id="GO:0043937">
    <property type="term" value="P:regulation of sporulation"/>
    <property type="evidence" value="ECO:0007669"/>
    <property type="project" value="InterPro"/>
</dbReference>
<dbReference type="Gene3D" id="3.10.28.10">
    <property type="entry name" value="Homing endonucleases"/>
    <property type="match status" value="1"/>
</dbReference>
<dbReference type="HAMAP" id="MF_01420">
    <property type="entry name" value="HTH_type_WhiA"/>
    <property type="match status" value="1"/>
</dbReference>
<dbReference type="InterPro" id="IPR027434">
    <property type="entry name" value="Homing_endonucl"/>
</dbReference>
<dbReference type="InterPro" id="IPR003802">
    <property type="entry name" value="Sporulation_regulator_WhiA"/>
</dbReference>
<dbReference type="InterPro" id="IPR023054">
    <property type="entry name" value="Sporulation_regulator_WhiA_C"/>
</dbReference>
<dbReference type="InterPro" id="IPR039518">
    <property type="entry name" value="WhiA_LAGLIDADG_dom"/>
</dbReference>
<dbReference type="NCBIfam" id="TIGR00647">
    <property type="entry name" value="DNA_bind_WhiA"/>
    <property type="match status" value="1"/>
</dbReference>
<dbReference type="PANTHER" id="PTHR37307">
    <property type="entry name" value="CELL DIVISION PROTEIN WHIA-RELATED"/>
    <property type="match status" value="1"/>
</dbReference>
<dbReference type="PANTHER" id="PTHR37307:SF1">
    <property type="entry name" value="CELL DIVISION PROTEIN WHIA-RELATED"/>
    <property type="match status" value="1"/>
</dbReference>
<dbReference type="Pfam" id="PF02650">
    <property type="entry name" value="HTH_WhiA"/>
    <property type="match status" value="1"/>
</dbReference>
<dbReference type="Pfam" id="PF14527">
    <property type="entry name" value="LAGLIDADG_WhiA"/>
    <property type="match status" value="1"/>
</dbReference>
<accession>P75530</accession>
<evidence type="ECO:0000255" key="1">
    <source>
        <dbReference type="HAMAP-Rule" id="MF_01420"/>
    </source>
</evidence>
<sequence length="280" mass="32194">MSFSVQIKHELATNPLIKTEWSSFLAGYFQNGLKLLATGQWSFKTSTATLKALFSNALQFSFQIHETSTHCEFSFRASQTEVDQLLAFDATQSDLPLQKAYVIGAFLSGGSVSDLLHSSNFHLQISTNNELQIKQLMKLFHPFKQTTKRHQLLVYVKSYQAICDFFKLVEAFDGYLAFEENQLQKNFALEQVRKSNLEIANLMRTLKTSTSTAEQLKILINSADFKKQSLNFQRFCLVKLDHPDWSLEQIAQFFERKYKVQITRSGIQHLNAKLKKLNQN</sequence>
<organism>
    <name type="scientific">Mycoplasma pneumoniae (strain ATCC 29342 / M129 / Subtype 1)</name>
    <name type="common">Mycoplasmoides pneumoniae</name>
    <dbReference type="NCBI Taxonomy" id="272634"/>
    <lineage>
        <taxon>Bacteria</taxon>
        <taxon>Bacillati</taxon>
        <taxon>Mycoplasmatota</taxon>
        <taxon>Mycoplasmoidales</taxon>
        <taxon>Mycoplasmoidaceae</taxon>
        <taxon>Mycoplasmoides</taxon>
    </lineage>
</organism>
<name>WHIA_MYCPN</name>
<feature type="chain" id="PRO_0000210416" description="Probable cell division protein WhiA">
    <location>
        <begin position="1"/>
        <end position="280"/>
    </location>
</feature>
<feature type="DNA-binding region" description="H-T-H motif" evidence="1">
    <location>
        <begin position="246"/>
        <end position="279"/>
    </location>
</feature>
<comment type="function">
    <text evidence="1">Involved in cell division and chromosome segregation.</text>
</comment>
<comment type="similarity">
    <text evidence="1">Belongs to the WhiA family.</text>
</comment>
<protein>
    <recommendedName>
        <fullName evidence="1">Probable cell division protein WhiA</fullName>
    </recommendedName>
</protein>
<keyword id="KW-0131">Cell cycle</keyword>
<keyword id="KW-0132">Cell division</keyword>
<keyword id="KW-0238">DNA-binding</keyword>
<keyword id="KW-1185">Reference proteome</keyword>
<reference key="1">
    <citation type="journal article" date="1996" name="Nucleic Acids Res.">
        <title>Complete sequence analysis of the genome of the bacterium Mycoplasma pneumoniae.</title>
        <authorList>
            <person name="Himmelreich R."/>
            <person name="Hilbert H."/>
            <person name="Plagens H."/>
            <person name="Pirkl E."/>
            <person name="Li B.-C."/>
            <person name="Herrmann R."/>
        </authorList>
    </citation>
    <scope>NUCLEOTIDE SEQUENCE [LARGE SCALE GENOMIC DNA]</scope>
    <source>
        <strain>ATCC 29342 / M129 / Subtype 1</strain>
    </source>
</reference>